<protein>
    <recommendedName>
        <fullName evidence="1">Large ribosomal subunit protein uL22</fullName>
    </recommendedName>
    <alternativeName>
        <fullName evidence="2">50S ribosomal protein L22</fullName>
    </alternativeName>
</protein>
<sequence length="133" mass="15217">MLSQIKREGNRVVMLVNRRYTARGKNLPSSPKKVRPIADNIRGKSYIKAIAVLCSMPNKGAKLLEKVVKSAASNAMYHNKNLSEDMIFVKIVMVDDGRRRKKIWPRARGRADRLVNRNCHIFVEVDEKKDIKG</sequence>
<gene>
    <name evidence="1" type="primary">rplV</name>
    <name type="ordered locus">BG0495</name>
</gene>
<proteinExistence type="inferred from homology"/>
<comment type="function">
    <text evidence="1">This protein binds specifically to 23S rRNA; its binding is stimulated by other ribosomal proteins, e.g. L4, L17, and L20. It is important during the early stages of 50S assembly. It makes multiple contacts with different domains of the 23S rRNA in the assembled 50S subunit and ribosome (By similarity).</text>
</comment>
<comment type="function">
    <text evidence="1">The globular domain of the protein is located near the polypeptide exit tunnel on the outside of the subunit, while an extended beta-hairpin is found that lines the wall of the exit tunnel in the center of the 70S ribosome.</text>
</comment>
<comment type="subunit">
    <text evidence="1">Part of the 50S ribosomal subunit.</text>
</comment>
<comment type="similarity">
    <text evidence="1">Belongs to the universal ribosomal protein uL22 family.</text>
</comment>
<dbReference type="EMBL" id="CP000013">
    <property type="protein sequence ID" value="AAU07334.1"/>
    <property type="molecule type" value="Genomic_DNA"/>
</dbReference>
<dbReference type="SMR" id="Q661D7"/>
<dbReference type="KEGG" id="bga:BG0495"/>
<dbReference type="eggNOG" id="COG0091">
    <property type="taxonomic scope" value="Bacteria"/>
</dbReference>
<dbReference type="HOGENOM" id="CLU_083987_3_1_12"/>
<dbReference type="Proteomes" id="UP000002276">
    <property type="component" value="Chromosome"/>
</dbReference>
<dbReference type="GO" id="GO:0022625">
    <property type="term" value="C:cytosolic large ribosomal subunit"/>
    <property type="evidence" value="ECO:0007669"/>
    <property type="project" value="TreeGrafter"/>
</dbReference>
<dbReference type="GO" id="GO:0019843">
    <property type="term" value="F:rRNA binding"/>
    <property type="evidence" value="ECO:0007669"/>
    <property type="project" value="UniProtKB-UniRule"/>
</dbReference>
<dbReference type="GO" id="GO:0003735">
    <property type="term" value="F:structural constituent of ribosome"/>
    <property type="evidence" value="ECO:0007669"/>
    <property type="project" value="InterPro"/>
</dbReference>
<dbReference type="GO" id="GO:0006412">
    <property type="term" value="P:translation"/>
    <property type="evidence" value="ECO:0007669"/>
    <property type="project" value="UniProtKB-UniRule"/>
</dbReference>
<dbReference type="CDD" id="cd00336">
    <property type="entry name" value="Ribosomal_L22"/>
    <property type="match status" value="1"/>
</dbReference>
<dbReference type="Gene3D" id="3.90.470.10">
    <property type="entry name" value="Ribosomal protein L22/L17"/>
    <property type="match status" value="1"/>
</dbReference>
<dbReference type="HAMAP" id="MF_01331_B">
    <property type="entry name" value="Ribosomal_uL22_B"/>
    <property type="match status" value="1"/>
</dbReference>
<dbReference type="InterPro" id="IPR001063">
    <property type="entry name" value="Ribosomal_uL22"/>
</dbReference>
<dbReference type="InterPro" id="IPR005727">
    <property type="entry name" value="Ribosomal_uL22_bac/chlpt-type"/>
</dbReference>
<dbReference type="InterPro" id="IPR047867">
    <property type="entry name" value="Ribosomal_uL22_bac/org-type"/>
</dbReference>
<dbReference type="InterPro" id="IPR018260">
    <property type="entry name" value="Ribosomal_uL22_CS"/>
</dbReference>
<dbReference type="InterPro" id="IPR036394">
    <property type="entry name" value="Ribosomal_uL22_sf"/>
</dbReference>
<dbReference type="NCBIfam" id="TIGR01044">
    <property type="entry name" value="rplV_bact"/>
    <property type="match status" value="1"/>
</dbReference>
<dbReference type="PANTHER" id="PTHR13501">
    <property type="entry name" value="CHLOROPLAST 50S RIBOSOMAL PROTEIN L22-RELATED"/>
    <property type="match status" value="1"/>
</dbReference>
<dbReference type="PANTHER" id="PTHR13501:SF8">
    <property type="entry name" value="LARGE RIBOSOMAL SUBUNIT PROTEIN UL22M"/>
    <property type="match status" value="1"/>
</dbReference>
<dbReference type="Pfam" id="PF00237">
    <property type="entry name" value="Ribosomal_L22"/>
    <property type="match status" value="1"/>
</dbReference>
<dbReference type="SUPFAM" id="SSF54843">
    <property type="entry name" value="Ribosomal protein L22"/>
    <property type="match status" value="1"/>
</dbReference>
<dbReference type="PROSITE" id="PS00464">
    <property type="entry name" value="RIBOSOMAL_L22"/>
    <property type="match status" value="1"/>
</dbReference>
<reference key="1">
    <citation type="journal article" date="2004" name="Nucleic Acids Res.">
        <title>Comparative analysis of the Borrelia garinii genome.</title>
        <authorList>
            <person name="Gloeckner G."/>
            <person name="Lehmann R."/>
            <person name="Romualdi A."/>
            <person name="Pradella S."/>
            <person name="Schulte-Spechtel U."/>
            <person name="Schilhabel M."/>
            <person name="Wilske B."/>
            <person name="Suehnel J."/>
            <person name="Platzer M."/>
        </authorList>
    </citation>
    <scope>NUCLEOTIDE SEQUENCE [LARGE SCALE GENOMIC DNA]</scope>
    <source>
        <strain>ATCC BAA-2496 / DSM 23469 / PBi</strain>
    </source>
</reference>
<organism>
    <name type="scientific">Borrelia garinii subsp. bavariensis (strain ATCC BAA-2496 / DSM 23469 / PBi)</name>
    <name type="common">Borreliella bavariensis</name>
    <dbReference type="NCBI Taxonomy" id="290434"/>
    <lineage>
        <taxon>Bacteria</taxon>
        <taxon>Pseudomonadati</taxon>
        <taxon>Spirochaetota</taxon>
        <taxon>Spirochaetia</taxon>
        <taxon>Spirochaetales</taxon>
        <taxon>Borreliaceae</taxon>
        <taxon>Borreliella</taxon>
    </lineage>
</organism>
<name>RL22_BORGP</name>
<evidence type="ECO:0000255" key="1">
    <source>
        <dbReference type="HAMAP-Rule" id="MF_01331"/>
    </source>
</evidence>
<evidence type="ECO:0000305" key="2"/>
<feature type="chain" id="PRO_0000243127" description="Large ribosomal subunit protein uL22">
    <location>
        <begin position="1"/>
        <end position="133"/>
    </location>
</feature>
<accession>Q661D7</accession>
<keyword id="KW-0687">Ribonucleoprotein</keyword>
<keyword id="KW-0689">Ribosomal protein</keyword>
<keyword id="KW-0694">RNA-binding</keyword>
<keyword id="KW-0699">rRNA-binding</keyword>